<keyword id="KW-0002">3D-structure</keyword>
<keyword id="KW-0130">Cell adhesion</keyword>
<keyword id="KW-1003">Cell membrane</keyword>
<keyword id="KW-0165">Cleavage on pair of basic residues</keyword>
<keyword id="KW-1015">Disulfide bond</keyword>
<keyword id="KW-0325">Glycoprotein</keyword>
<keyword id="KW-0472">Membrane</keyword>
<keyword id="KW-0597">Phosphoprotein</keyword>
<keyword id="KW-1185">Reference proteome</keyword>
<keyword id="KW-0677">Repeat</keyword>
<keyword id="KW-0730">Sialic acid</keyword>
<keyword id="KW-0732">Signal</keyword>
<keyword id="KW-0765">Sulfation</keyword>
<keyword id="KW-0812">Transmembrane</keyword>
<keyword id="KW-1133">Transmembrane helix</keyword>
<accession>Q62170</accession>
<sequence>MSPSFLVLLTILGPGNSLQLQDPWGHETKEAPGPVHLRERRQVVGDDDFEDPDYTYNTDPPELLKNVTNTVAAHPELPTTVVMLERDSTSAGTSERATEKIATTDPTAPGTGGTAVGMLSTDSATQWSLTSVETVQPASTEVETSQPAPMEAETSQPAPMEAETSQPAPMEAETSQPAPMEADTSQPAPMEAETSQPAPNEAETSKPAPTEAETSKPAPTEAETTQLPRIQAVKTLFTTSAATEVPSTEPTTMETASTESNESTIFLGPSVTHLPDSGLKKGLIVTPGNSPAPTLPGSSDLIPVKQCLLIILILASLATIFLVCTVVLAVRLSRKTHMYPVRNYSPTEMICISSLLPEGGDGAPVTANGGLPKVQDLKTEPSGDRDGDDLTLHSFLP</sequence>
<gene>
    <name type="primary">Selplg</name>
    <name type="synonym">Selp1</name>
    <name type="synonym">Selpl</name>
</gene>
<evidence type="ECO:0000250" key="1"/>
<evidence type="ECO:0000250" key="2">
    <source>
        <dbReference type="UniProtKB" id="Q14242"/>
    </source>
</evidence>
<evidence type="ECO:0000255" key="3"/>
<evidence type="ECO:0000256" key="4">
    <source>
        <dbReference type="SAM" id="MobiDB-lite"/>
    </source>
</evidence>
<evidence type="ECO:0000269" key="5">
    <source>
    </source>
</evidence>
<evidence type="ECO:0000269" key="6">
    <source>
    </source>
</evidence>
<evidence type="ECO:0000269" key="7">
    <source>
    </source>
</evidence>
<evidence type="ECO:0000269" key="8">
    <source>
    </source>
</evidence>
<evidence type="ECO:0000269" key="9">
    <source>
    </source>
</evidence>
<evidence type="ECO:0000305" key="10"/>
<evidence type="ECO:0000305" key="11">
    <source>
    </source>
</evidence>
<evidence type="ECO:0007829" key="12">
    <source>
        <dbReference type="PDB" id="2EMT"/>
    </source>
</evidence>
<dbReference type="EMBL" id="X91144">
    <property type="protein sequence ID" value="CAA62583.1"/>
    <property type="molecule type" value="mRNA"/>
</dbReference>
<dbReference type="EMBL" id="AC159240">
    <property type="status" value="NOT_ANNOTATED_CDS"/>
    <property type="molecule type" value="Genomic_DNA"/>
</dbReference>
<dbReference type="PDB" id="2EMT">
    <property type="method" value="X-ray"/>
    <property type="resolution" value="2.80 A"/>
    <property type="chains" value="C/D/E=331-348"/>
</dbReference>
<dbReference type="PDBsum" id="2EMT"/>
<dbReference type="SMR" id="Q62170"/>
<dbReference type="CORUM" id="Q62170"/>
<dbReference type="DIP" id="DIP-59330N"/>
<dbReference type="FunCoup" id="Q62170">
    <property type="interactions" value="156"/>
</dbReference>
<dbReference type="IntAct" id="Q62170">
    <property type="interactions" value="1"/>
</dbReference>
<dbReference type="STRING" id="10090.ENSMUSP00000098436"/>
<dbReference type="GlyCosmos" id="Q62170">
    <property type="glycosylation" value="3 sites, No reported glycans"/>
</dbReference>
<dbReference type="GlyGen" id="Q62170">
    <property type="glycosylation" value="3 sites, 1 N-linked glycan (1 site)"/>
</dbReference>
<dbReference type="iPTMnet" id="Q62170"/>
<dbReference type="PhosphoSitePlus" id="Q62170"/>
<dbReference type="SwissPalm" id="Q62170"/>
<dbReference type="jPOST" id="Q62170"/>
<dbReference type="PaxDb" id="10090-ENSMUSP00000098436"/>
<dbReference type="ProteomicsDB" id="256942"/>
<dbReference type="AGR" id="MGI:106689"/>
<dbReference type="MGI" id="MGI:106689">
    <property type="gene designation" value="Selplg"/>
</dbReference>
<dbReference type="eggNOG" id="KOG4818">
    <property type="taxonomic scope" value="Eukaryota"/>
</dbReference>
<dbReference type="InParanoid" id="Q62170"/>
<dbReference type="Reactome" id="R-MMU-202733">
    <property type="pathway name" value="Cell surface interactions at the vascular wall"/>
</dbReference>
<dbReference type="ChiTaRS" id="Selplg">
    <property type="organism name" value="mouse"/>
</dbReference>
<dbReference type="PRO" id="PR:Q62170"/>
<dbReference type="Proteomes" id="UP000000589">
    <property type="component" value="Unplaced"/>
</dbReference>
<dbReference type="RNAct" id="Q62170">
    <property type="molecule type" value="protein"/>
</dbReference>
<dbReference type="GO" id="GO:0005886">
    <property type="term" value="C:plasma membrane"/>
    <property type="evidence" value="ECO:0007669"/>
    <property type="project" value="UniProtKB-SubCell"/>
</dbReference>
<dbReference type="GO" id="GO:0050902">
    <property type="term" value="P:leukocyte adhesive activation"/>
    <property type="evidence" value="ECO:0000315"/>
    <property type="project" value="UniProtKB"/>
</dbReference>
<dbReference type="GO" id="GO:0050901">
    <property type="term" value="P:leukocyte tethering or rolling"/>
    <property type="evidence" value="ECO:0000315"/>
    <property type="project" value="MGI"/>
</dbReference>
<dbReference type="IDEAL" id="IID50120"/>
<dbReference type="InterPro" id="IPR026195">
    <property type="entry name" value="PSGL-1"/>
</dbReference>
<dbReference type="PANTHER" id="PTHR17384:SF7">
    <property type="entry name" value="P-SELECTIN GLYCOPROTEIN LIGAND 1"/>
    <property type="match status" value="1"/>
</dbReference>
<dbReference type="PANTHER" id="PTHR17384">
    <property type="entry name" value="P-SELECTIN GLYCOPROTEIN LIGAND-1"/>
    <property type="match status" value="1"/>
</dbReference>
<feature type="signal peptide" evidence="3">
    <location>
        <begin position="1"/>
        <end position="17"/>
    </location>
</feature>
<feature type="propeptide" id="PRO_0000022304" evidence="1">
    <location>
        <begin position="18"/>
        <end position="41"/>
    </location>
</feature>
<feature type="chain" id="PRO_0000022305" description="P-selectin glycoprotein ligand 1">
    <location>
        <begin position="42"/>
        <end position="397"/>
    </location>
</feature>
<feature type="topological domain" description="Extracellular" evidence="3">
    <location>
        <begin position="18"/>
        <end position="307"/>
    </location>
</feature>
<feature type="transmembrane region" description="Helical" evidence="3">
    <location>
        <begin position="308"/>
        <end position="328"/>
    </location>
</feature>
<feature type="topological domain" description="Cytoplasmic" evidence="3">
    <location>
        <begin position="329"/>
        <end position="397"/>
    </location>
</feature>
<feature type="repeat" description="1">
    <location>
        <begin position="126"/>
        <end position="135"/>
    </location>
</feature>
<feature type="repeat" description="2">
    <location>
        <begin position="136"/>
        <end position="145"/>
    </location>
</feature>
<feature type="repeat" description="3">
    <location>
        <begin position="146"/>
        <end position="155"/>
    </location>
</feature>
<feature type="repeat" description="4">
    <location>
        <begin position="156"/>
        <end position="165"/>
    </location>
</feature>
<feature type="repeat" description="5">
    <location>
        <begin position="166"/>
        <end position="175"/>
    </location>
</feature>
<feature type="repeat" description="6">
    <location>
        <begin position="176"/>
        <end position="185"/>
    </location>
</feature>
<feature type="repeat" description="7">
    <location>
        <begin position="186"/>
        <end position="195"/>
    </location>
</feature>
<feature type="repeat" description="8">
    <location>
        <begin position="196"/>
        <end position="205"/>
    </location>
</feature>
<feature type="repeat" description="9">
    <location>
        <begin position="206"/>
        <end position="215"/>
    </location>
</feature>
<feature type="repeat" description="10">
    <location>
        <begin position="216"/>
        <end position="225"/>
    </location>
</feature>
<feature type="region of interest" description="Disordered" evidence="4">
    <location>
        <begin position="89"/>
        <end position="261"/>
    </location>
</feature>
<feature type="region of interest" description="10 X 10 AA tandem repeats">
    <location>
        <begin position="126"/>
        <end position="225"/>
    </location>
</feature>
<feature type="region of interest" description="Disordered" evidence="4">
    <location>
        <begin position="364"/>
        <end position="390"/>
    </location>
</feature>
<feature type="compositionally biased region" description="Polar residues" evidence="4">
    <location>
        <begin position="120"/>
        <end position="198"/>
    </location>
</feature>
<feature type="compositionally biased region" description="Polar residues" evidence="4">
    <location>
        <begin position="236"/>
        <end position="261"/>
    </location>
</feature>
<feature type="compositionally biased region" description="Basic and acidic residues" evidence="4">
    <location>
        <begin position="375"/>
        <end position="390"/>
    </location>
</feature>
<feature type="modified residue" description="Sulfotyrosine" evidence="11">
    <location>
        <position position="54"/>
    </location>
</feature>
<feature type="modified residue" description="Phosphothreonine" evidence="2">
    <location>
        <position position="391"/>
    </location>
</feature>
<feature type="modified residue" description="Phosphoserine" evidence="2">
    <location>
        <position position="394"/>
    </location>
</feature>
<feature type="glycosylation site" description="O-linked (GalNAc...) threonine" evidence="10">
    <location>
        <position position="58"/>
    </location>
</feature>
<feature type="glycosylation site" description="N-linked (GlcNAc...) asparagine" evidence="3">
    <location>
        <position position="66"/>
    </location>
</feature>
<feature type="glycosylation site" description="N-linked (GlcNAc...) asparagine" evidence="3">
    <location>
        <position position="261"/>
    </location>
</feature>
<feature type="disulfide bond" description="Interchain" evidence="1">
    <location>
        <position position="307"/>
    </location>
</feature>
<feature type="mutagenesis site" description="Greatly decreased P-selectin binding and tethering and rolling of cells. No further reduction of P-selectin binding; when associated with Y-56. Binding of P-selectin completely abolished; when associated with A-55; Y-56 and A-58." evidence="7">
    <original>Y</original>
    <variation>F</variation>
    <location>
        <position position="54"/>
    </location>
</feature>
<feature type="mutagenesis site" description="No effect on P-selectin binding. Greatly reduced P-selectin binding and tethering and rolling of cells; when associated with A-58. Binding of P-selectin completely abolished; when associated with Y-54; Y-56 and A-58." evidence="7">
    <original>T</original>
    <variation>A</variation>
    <location>
        <position position="55"/>
    </location>
</feature>
<feature type="mutagenesis site" description="No effect on P-selectin binding. Greatly decreased P-selectin binding and tethering and rolling of cells; when associated with Y-54. Binding of P-selectin completely abolished; when associated with Y-54; A-55 and A-58." evidence="7">
    <original>Y</original>
    <variation>F</variation>
    <location>
        <position position="56"/>
    </location>
</feature>
<feature type="mutagenesis site" description="Greatly decreased P-selectin binding and tethering and rolling of cells. No further reduction in P-selectin binding when associated with A-55. Binding of P-selectin completely abolished; when associated with Y-54; A-55; and Y-56." evidence="7">
    <original>T</original>
    <variation>A</variation>
    <location>
        <position position="58"/>
    </location>
</feature>
<feature type="mutagenesis site" description="No effect on P-selectin binding; when associated with A-261.">
    <original>N</original>
    <variation>T</variation>
    <location>
        <position position="66"/>
    </location>
</feature>
<feature type="mutagenesis site" description="No effect on P-selectin binding; when associated with T-66.">
    <original>N</original>
    <variation>A</variation>
    <location>
        <position position="261"/>
    </location>
</feature>
<feature type="sequence conflict" description="In Ref. 1; CAA62583." evidence="10" ref="1">
    <original>E</original>
    <variation>D</variation>
    <location>
        <position position="173"/>
    </location>
</feature>
<feature type="sequence conflict" description="In Ref. 1; CAA62583." evidence="10" ref="1">
    <original>Q</original>
    <variation>K</variation>
    <location>
        <position position="176"/>
    </location>
</feature>
<feature type="sequence conflict" description="In Ref. 1; CAA62583." evidence="10" ref="1">
    <original>M</original>
    <variation>T</variation>
    <location>
        <position position="180"/>
    </location>
</feature>
<feature type="sequence conflict" description="In Ref. 1; CAA62583." evidence="10" ref="1">
    <original>D</original>
    <variation>E</variation>
    <location>
        <position position="183"/>
    </location>
</feature>
<feature type="sequence conflict" description="In Ref. 1; CAA62583." evidence="10" ref="1">
    <original>Q</original>
    <variation>K</variation>
    <location>
        <position position="186"/>
    </location>
</feature>
<feature type="sequence conflict" description="In Ref. 1; CAA62583." evidence="10" ref="1">
    <original>M</original>
    <variation>T</variation>
    <location>
        <position position="190"/>
    </location>
</feature>
<feature type="strand" evidence="12">
    <location>
        <begin position="337"/>
        <end position="342"/>
    </location>
</feature>
<reference key="1">
    <citation type="journal article" date="1996" name="Blood">
        <title>Mouse P-selectin glycoprotein ligand-1: molecular cloning, chromosomal localization, and expression of a functional P-selectin receptor.</title>
        <authorList>
            <person name="Yang J."/>
            <person name="Galipeau J."/>
            <person name="Kozak C."/>
            <person name="Furie B.C."/>
            <person name="Furie B."/>
        </authorList>
    </citation>
    <scope>NUCLEOTIDE SEQUENCE [GENOMIC DNA / MRNA]</scope>
    <scope>INTERACTION WITH SELE AND SELP</scope>
    <scope>TISSUE SPECIFICITY</scope>
    <source>
        <strain>BALB/cJ</strain>
    </source>
</reference>
<reference key="2">
    <citation type="journal article" date="2009" name="PLoS Biol.">
        <title>Lineage-specific biology revealed by a finished genome assembly of the mouse.</title>
        <authorList>
            <person name="Church D.M."/>
            <person name="Goodstadt L."/>
            <person name="Hillier L.W."/>
            <person name="Zody M.C."/>
            <person name="Goldstein S."/>
            <person name="She X."/>
            <person name="Bult C.J."/>
            <person name="Agarwala R."/>
            <person name="Cherry J.L."/>
            <person name="DiCuccio M."/>
            <person name="Hlavina W."/>
            <person name="Kapustin Y."/>
            <person name="Meric P."/>
            <person name="Maglott D."/>
            <person name="Birtle Z."/>
            <person name="Marques A.C."/>
            <person name="Graves T."/>
            <person name="Zhou S."/>
            <person name="Teague B."/>
            <person name="Potamousis K."/>
            <person name="Churas C."/>
            <person name="Place M."/>
            <person name="Herschleb J."/>
            <person name="Runnheim R."/>
            <person name="Forrest D."/>
            <person name="Amos-Landgraf J."/>
            <person name="Schwartz D.C."/>
            <person name="Cheng Z."/>
            <person name="Lindblad-Toh K."/>
            <person name="Eichler E.E."/>
            <person name="Ponting C.P."/>
        </authorList>
    </citation>
    <scope>NUCLEOTIDE SEQUENCE [LARGE SCALE GENOMIC DNA]</scope>
    <source>
        <strain>C57BL/6J</strain>
    </source>
</reference>
<reference key="3">
    <citation type="journal article" date="2000" name="J. Exp. Med.">
        <title>P-Selectin glycoprotein ligand 1 (PSGL-1) is a physiological ligand for E-selectin in mediating T helper 1 lymphocyte migration.</title>
        <authorList>
            <person name="Hirata T."/>
            <person name="Merrill-Skoloff G."/>
            <person name="Aab M."/>
            <person name="Yang J."/>
            <person name="Furie B.C."/>
            <person name="Furie B."/>
        </authorList>
    </citation>
    <scope>INTERACTION WITH SELE AND SELP</scope>
    <scope>FUNCTION</scope>
</reference>
<reference key="4">
    <citation type="journal article" date="2002" name="J. Immunol.">
        <title>P-, E-, and L-selectin mediate migration of activated CD8+ T lymphocytes into inflamed skin.</title>
        <authorList>
            <person name="Hirata T."/>
            <person name="Furie B.C."/>
            <person name="Furie B."/>
        </authorList>
    </citation>
    <scope>FUNCTION</scope>
</reference>
<reference key="5">
    <citation type="journal article" date="2003" name="Blood">
        <title>N-terminal residues in murine P-selectin glycoprotein ligand-1 required for binding to murine P-selectin.</title>
        <authorList>
            <person name="Xia L."/>
            <person name="Ramachandran V."/>
            <person name="McDaniel J.M."/>
            <person name="Nguyen K.N."/>
            <person name="Cummings R.D."/>
            <person name="McEver R.P."/>
        </authorList>
    </citation>
    <scope>INTERACTION WITH SELP</scope>
    <scope>SULFATION AT TYR-54</scope>
    <scope>MUTAGENESIS OF TYR-54; THR-55; TYR-56 AND THR-58</scope>
</reference>
<reference key="6">
    <citation type="journal article" date="2007" name="Immunity">
        <title>Complete identification of E-selectin ligands on neutrophils reveals distinct functions of PSGL-1, ESL-1, and CD44.</title>
        <authorList>
            <person name="Hidalgo A."/>
            <person name="Peired A.J."/>
            <person name="Wild M.K."/>
            <person name="Vestweber D."/>
            <person name="Frenette P.S."/>
        </authorList>
    </citation>
    <scope>FUNCTION</scope>
</reference>
<reference key="7">
    <citation type="journal article" date="2009" name="Immunity">
        <title>The phagosomal proteome in interferon-gamma-activated macrophages.</title>
        <authorList>
            <person name="Trost M."/>
            <person name="English L."/>
            <person name="Lemieux S."/>
            <person name="Courcelles M."/>
            <person name="Desjardins M."/>
            <person name="Thibault P."/>
        </authorList>
    </citation>
    <scope>IDENTIFICATION BY MASS SPECTROMETRY [LARGE SCALE ANALYSIS]</scope>
</reference>
<reference key="8">
    <citation type="journal article" date="2010" name="Cell">
        <title>A tissue-specific atlas of mouse protein phosphorylation and expression.</title>
        <authorList>
            <person name="Huttlin E.L."/>
            <person name="Jedrychowski M.P."/>
            <person name="Elias J.E."/>
            <person name="Goswami T."/>
            <person name="Rad R."/>
            <person name="Beausoleil S.A."/>
            <person name="Villen J."/>
            <person name="Haas W."/>
            <person name="Sowa M.E."/>
            <person name="Gygi S.P."/>
        </authorList>
    </citation>
    <scope>IDENTIFICATION BY MASS SPECTROMETRY [LARGE SCALE ANALYSIS]</scope>
    <source>
        <tissue>Lung</tissue>
    </source>
</reference>
<proteinExistence type="evidence at protein level"/>
<name>SELPL_MOUSE</name>
<organism>
    <name type="scientific">Mus musculus</name>
    <name type="common">Mouse</name>
    <dbReference type="NCBI Taxonomy" id="10090"/>
    <lineage>
        <taxon>Eukaryota</taxon>
        <taxon>Metazoa</taxon>
        <taxon>Chordata</taxon>
        <taxon>Craniata</taxon>
        <taxon>Vertebrata</taxon>
        <taxon>Euteleostomi</taxon>
        <taxon>Mammalia</taxon>
        <taxon>Eutheria</taxon>
        <taxon>Euarchontoglires</taxon>
        <taxon>Glires</taxon>
        <taxon>Rodentia</taxon>
        <taxon>Myomorpha</taxon>
        <taxon>Muroidea</taxon>
        <taxon>Muridae</taxon>
        <taxon>Murinae</taxon>
        <taxon>Mus</taxon>
        <taxon>Mus</taxon>
    </lineage>
</organism>
<protein>
    <recommendedName>
        <fullName>P-selectin glycoprotein ligand 1</fullName>
        <shortName>PSGL-1</shortName>
    </recommendedName>
    <alternativeName>
        <fullName>Selectin P ligand</fullName>
    </alternativeName>
    <cdAntigenName>CD162</cdAntigenName>
</protein>
<comment type="function">
    <text evidence="5 6 8">A SLe(x)-type proteoglycan, which through high affinity, calcium-dependent interactions with E- and P-selectins, mediates rapid rolling of leukocytes over vascular surfaces during the initial steps in inflammation. Critical for the initial leukocyte capture.</text>
</comment>
<comment type="subunit">
    <text evidence="1">Homodimer; disulfide-linked. Interacts with P- and E-selectins, through their lectin/EGF domains. Interaction with P-selectin requires sialyl Lewis X glycan modification and tyrosine sulfation, probably on Tyr-54, for high affinity binding (By similarity). Dimerization appears not to be required for P-selectin/SELP binding (By similarity). Interacts with SNX20 (By similarity). Interacts with MSN and SYK; mediates SYK activation downstream of SELPLG (By similarity). Interacts with HAVCR1 (By similarity).</text>
</comment>
<comment type="subcellular location">
    <subcellularLocation>
        <location evidence="10">Cell membrane</location>
        <topology evidence="10">Single-pass membrane protein</topology>
    </subcellularLocation>
</comment>
<comment type="tissue specificity">
    <text evidence="9">Highly expressed in blood, bone marrow, brain, adipose tissue, spleen, and thymus. Also expressed in heart, kidney, liver, muscle, ovary, and stomach.</text>
</comment>
<comment type="PTM">
    <text evidence="1">Displays complex, core-2, sialylated and fucosylated O-linked oligosaccharides, at least some of which appear to contain poly-N-acetyllactosamine with varying degrees of substitution. Mainly disialylated or neutral forms of the core-2 tetrasaccharide, Galbeta1--&gt;4GlcNAcbeta1--&gt;6(Galbeta1--&gt;3)GalNAcOH. The GlcN:GalN ratio is approximately 2:1 and the Man:Fuc ratio 3:5. Contains about 14% fucose with alpha-1,3 linkage present in two forms: One species is a disialylated, monofucosylated glycan, and the other, a monosialylated, trifucosylated glycan with a polylactosamine backbone. The fucosylated forms carry the Lewis antigen and are important for interaction with selectins and for functioning. No sulfated O-glycans. Some N-glycosylation (By similarity).</text>
</comment>